<dbReference type="EMBL" id="CP001097">
    <property type="protein sequence ID" value="ACD89707.1"/>
    <property type="molecule type" value="Genomic_DNA"/>
</dbReference>
<dbReference type="RefSeq" id="WP_012465588.1">
    <property type="nucleotide sequence ID" value="NC_010803.1"/>
</dbReference>
<dbReference type="SMR" id="B3EH27"/>
<dbReference type="STRING" id="290315.Clim_0620"/>
<dbReference type="KEGG" id="cli:Clim_0620"/>
<dbReference type="eggNOG" id="COG0509">
    <property type="taxonomic scope" value="Bacteria"/>
</dbReference>
<dbReference type="HOGENOM" id="CLU_097408_2_2_10"/>
<dbReference type="OrthoDB" id="9796712at2"/>
<dbReference type="Proteomes" id="UP000008841">
    <property type="component" value="Chromosome"/>
</dbReference>
<dbReference type="GO" id="GO:0005829">
    <property type="term" value="C:cytosol"/>
    <property type="evidence" value="ECO:0007669"/>
    <property type="project" value="TreeGrafter"/>
</dbReference>
<dbReference type="GO" id="GO:0005960">
    <property type="term" value="C:glycine cleavage complex"/>
    <property type="evidence" value="ECO:0007669"/>
    <property type="project" value="InterPro"/>
</dbReference>
<dbReference type="GO" id="GO:0019464">
    <property type="term" value="P:glycine decarboxylation via glycine cleavage system"/>
    <property type="evidence" value="ECO:0007669"/>
    <property type="project" value="UniProtKB-UniRule"/>
</dbReference>
<dbReference type="CDD" id="cd06848">
    <property type="entry name" value="GCS_H"/>
    <property type="match status" value="1"/>
</dbReference>
<dbReference type="Gene3D" id="2.40.50.100">
    <property type="match status" value="1"/>
</dbReference>
<dbReference type="HAMAP" id="MF_00272">
    <property type="entry name" value="GcvH"/>
    <property type="match status" value="1"/>
</dbReference>
<dbReference type="InterPro" id="IPR003016">
    <property type="entry name" value="2-oxoA_DH_lipoyl-BS"/>
</dbReference>
<dbReference type="InterPro" id="IPR000089">
    <property type="entry name" value="Biotin_lipoyl"/>
</dbReference>
<dbReference type="InterPro" id="IPR002930">
    <property type="entry name" value="GCV_H"/>
</dbReference>
<dbReference type="InterPro" id="IPR033753">
    <property type="entry name" value="GCV_H/Fam206"/>
</dbReference>
<dbReference type="InterPro" id="IPR017453">
    <property type="entry name" value="GCV_H_sub"/>
</dbReference>
<dbReference type="InterPro" id="IPR011053">
    <property type="entry name" value="Single_hybrid_motif"/>
</dbReference>
<dbReference type="NCBIfam" id="TIGR00527">
    <property type="entry name" value="gcvH"/>
    <property type="match status" value="1"/>
</dbReference>
<dbReference type="NCBIfam" id="NF002270">
    <property type="entry name" value="PRK01202.1"/>
    <property type="match status" value="1"/>
</dbReference>
<dbReference type="PANTHER" id="PTHR11715">
    <property type="entry name" value="GLYCINE CLEAVAGE SYSTEM H PROTEIN"/>
    <property type="match status" value="1"/>
</dbReference>
<dbReference type="PANTHER" id="PTHR11715:SF3">
    <property type="entry name" value="GLYCINE CLEAVAGE SYSTEM H PROTEIN-RELATED"/>
    <property type="match status" value="1"/>
</dbReference>
<dbReference type="Pfam" id="PF01597">
    <property type="entry name" value="GCV_H"/>
    <property type="match status" value="1"/>
</dbReference>
<dbReference type="SUPFAM" id="SSF51230">
    <property type="entry name" value="Single hybrid motif"/>
    <property type="match status" value="1"/>
</dbReference>
<dbReference type="PROSITE" id="PS50968">
    <property type="entry name" value="BIOTINYL_LIPOYL"/>
    <property type="match status" value="1"/>
</dbReference>
<dbReference type="PROSITE" id="PS00189">
    <property type="entry name" value="LIPOYL"/>
    <property type="match status" value="1"/>
</dbReference>
<reference key="1">
    <citation type="submission" date="2008-05" db="EMBL/GenBank/DDBJ databases">
        <title>Complete sequence of Chlorobium limicola DSM 245.</title>
        <authorList>
            <consortium name="US DOE Joint Genome Institute"/>
            <person name="Lucas S."/>
            <person name="Copeland A."/>
            <person name="Lapidus A."/>
            <person name="Glavina del Rio T."/>
            <person name="Dalin E."/>
            <person name="Tice H."/>
            <person name="Bruce D."/>
            <person name="Goodwin L."/>
            <person name="Pitluck S."/>
            <person name="Schmutz J."/>
            <person name="Larimer F."/>
            <person name="Land M."/>
            <person name="Hauser L."/>
            <person name="Kyrpides N."/>
            <person name="Ovchinnikova G."/>
            <person name="Zhao F."/>
            <person name="Li T."/>
            <person name="Liu Z."/>
            <person name="Overmann J."/>
            <person name="Bryant D.A."/>
            <person name="Richardson P."/>
        </authorList>
    </citation>
    <scope>NUCLEOTIDE SEQUENCE [LARGE SCALE GENOMIC DNA]</scope>
    <source>
        <strain>DSM 245 / NBRC 103803 / 6330</strain>
    </source>
</reference>
<comment type="function">
    <text evidence="1">The glycine cleavage system catalyzes the degradation of glycine. The H protein shuttles the methylamine group of glycine from the P protein to the T protein.</text>
</comment>
<comment type="cofactor">
    <cofactor evidence="1">
        <name>(R)-lipoate</name>
        <dbReference type="ChEBI" id="CHEBI:83088"/>
    </cofactor>
    <text evidence="1">Binds 1 lipoyl cofactor covalently.</text>
</comment>
<comment type="subunit">
    <text evidence="1">The glycine cleavage system is composed of four proteins: P, T, L and H.</text>
</comment>
<comment type="similarity">
    <text evidence="1">Belongs to the GcvH family.</text>
</comment>
<gene>
    <name evidence="1" type="primary">gcvH</name>
    <name type="ordered locus">Clim_0620</name>
</gene>
<evidence type="ECO:0000255" key="1">
    <source>
        <dbReference type="HAMAP-Rule" id="MF_00272"/>
    </source>
</evidence>
<evidence type="ECO:0000255" key="2">
    <source>
        <dbReference type="PROSITE-ProRule" id="PRU01066"/>
    </source>
</evidence>
<keyword id="KW-0450">Lipoyl</keyword>
<organism>
    <name type="scientific">Chlorobium limicola (strain DSM 245 / NBRC 103803 / 6330)</name>
    <dbReference type="NCBI Taxonomy" id="290315"/>
    <lineage>
        <taxon>Bacteria</taxon>
        <taxon>Pseudomonadati</taxon>
        <taxon>Chlorobiota</taxon>
        <taxon>Chlorobiia</taxon>
        <taxon>Chlorobiales</taxon>
        <taxon>Chlorobiaceae</taxon>
        <taxon>Chlorobium/Pelodictyon group</taxon>
        <taxon>Chlorobium</taxon>
    </lineage>
</organism>
<protein>
    <recommendedName>
        <fullName evidence="1">Glycine cleavage system H protein</fullName>
    </recommendedName>
</protein>
<sequence>MSIPDDLRYTKDHEWIKLLEDGSAALVGITDFAQSELGDIVFVELKPAGTKLKAHEVFGTVEAVKTVADLFAPVAGEIMEVNGSLDAAEVVNQDPYGEGWLVKIRIDDPASLAELLDAAAYRELIGE</sequence>
<feature type="chain" id="PRO_1000114506" description="Glycine cleavage system H protein">
    <location>
        <begin position="1"/>
        <end position="127"/>
    </location>
</feature>
<feature type="domain" description="Lipoyl-binding" evidence="2">
    <location>
        <begin position="24"/>
        <end position="105"/>
    </location>
</feature>
<feature type="modified residue" description="N6-lipoyllysine" evidence="1">
    <location>
        <position position="65"/>
    </location>
</feature>
<name>GCSH_CHLL2</name>
<proteinExistence type="inferred from homology"/>
<accession>B3EH27</accession>